<protein>
    <recommendedName>
        <fullName evidence="1">Glucose-6-phosphate isomerase</fullName>
        <shortName evidence="1">GPI</shortName>
        <ecNumber evidence="1">5.3.1.9</ecNumber>
    </recommendedName>
    <alternativeName>
        <fullName evidence="1">Phosphoglucose isomerase</fullName>
        <shortName evidence="1">PGI</shortName>
    </alternativeName>
    <alternativeName>
        <fullName evidence="1">Phosphohexose isomerase</fullName>
        <shortName evidence="1">PHI</shortName>
    </alternativeName>
</protein>
<keyword id="KW-0007">Acetylation</keyword>
<keyword id="KW-0963">Cytoplasm</keyword>
<keyword id="KW-0312">Gluconeogenesis</keyword>
<keyword id="KW-0324">Glycolysis</keyword>
<keyword id="KW-0413">Isomerase</keyword>
<dbReference type="EC" id="5.3.1.9" evidence="1"/>
<dbReference type="EMBL" id="CP000266">
    <property type="protein sequence ID" value="ABF06172.1"/>
    <property type="molecule type" value="Genomic_DNA"/>
</dbReference>
<dbReference type="RefSeq" id="WP_000790014.1">
    <property type="nucleotide sequence ID" value="NC_008258.1"/>
</dbReference>
<dbReference type="SMR" id="Q0SXP3"/>
<dbReference type="KEGG" id="sfv:SFV_4188"/>
<dbReference type="HOGENOM" id="CLU_017947_3_1_6"/>
<dbReference type="UniPathway" id="UPA00109">
    <property type="reaction ID" value="UER00181"/>
</dbReference>
<dbReference type="UniPathway" id="UPA00138"/>
<dbReference type="Proteomes" id="UP000000659">
    <property type="component" value="Chromosome"/>
</dbReference>
<dbReference type="GO" id="GO:0005829">
    <property type="term" value="C:cytosol"/>
    <property type="evidence" value="ECO:0007669"/>
    <property type="project" value="TreeGrafter"/>
</dbReference>
<dbReference type="GO" id="GO:0097367">
    <property type="term" value="F:carbohydrate derivative binding"/>
    <property type="evidence" value="ECO:0007669"/>
    <property type="project" value="InterPro"/>
</dbReference>
<dbReference type="GO" id="GO:0004347">
    <property type="term" value="F:glucose-6-phosphate isomerase activity"/>
    <property type="evidence" value="ECO:0007669"/>
    <property type="project" value="UniProtKB-UniRule"/>
</dbReference>
<dbReference type="GO" id="GO:0048029">
    <property type="term" value="F:monosaccharide binding"/>
    <property type="evidence" value="ECO:0007669"/>
    <property type="project" value="TreeGrafter"/>
</dbReference>
<dbReference type="GO" id="GO:0006094">
    <property type="term" value="P:gluconeogenesis"/>
    <property type="evidence" value="ECO:0007669"/>
    <property type="project" value="UniProtKB-UniRule"/>
</dbReference>
<dbReference type="GO" id="GO:0051156">
    <property type="term" value="P:glucose 6-phosphate metabolic process"/>
    <property type="evidence" value="ECO:0007669"/>
    <property type="project" value="TreeGrafter"/>
</dbReference>
<dbReference type="GO" id="GO:0006096">
    <property type="term" value="P:glycolytic process"/>
    <property type="evidence" value="ECO:0007669"/>
    <property type="project" value="UniProtKB-UniRule"/>
</dbReference>
<dbReference type="CDD" id="cd05015">
    <property type="entry name" value="SIS_PGI_1"/>
    <property type="match status" value="1"/>
</dbReference>
<dbReference type="CDD" id="cd05016">
    <property type="entry name" value="SIS_PGI_2"/>
    <property type="match status" value="1"/>
</dbReference>
<dbReference type="FunFam" id="1.10.1390.10:FF:000001">
    <property type="entry name" value="Glucose-6-phosphate isomerase"/>
    <property type="match status" value="1"/>
</dbReference>
<dbReference type="FunFam" id="3.40.50.10490:FF:000004">
    <property type="entry name" value="Glucose-6-phosphate isomerase"/>
    <property type="match status" value="1"/>
</dbReference>
<dbReference type="Gene3D" id="1.10.1390.10">
    <property type="match status" value="1"/>
</dbReference>
<dbReference type="Gene3D" id="3.40.50.10490">
    <property type="entry name" value="Glucose-6-phosphate isomerase like protein, domain 1"/>
    <property type="match status" value="2"/>
</dbReference>
<dbReference type="HAMAP" id="MF_00473">
    <property type="entry name" value="G6P_isomerase"/>
    <property type="match status" value="1"/>
</dbReference>
<dbReference type="InterPro" id="IPR001672">
    <property type="entry name" value="G6P_Isomerase"/>
</dbReference>
<dbReference type="InterPro" id="IPR023096">
    <property type="entry name" value="G6P_Isomerase_C"/>
</dbReference>
<dbReference type="InterPro" id="IPR018189">
    <property type="entry name" value="Phosphoglucose_isomerase_CS"/>
</dbReference>
<dbReference type="InterPro" id="IPR046348">
    <property type="entry name" value="SIS_dom_sf"/>
</dbReference>
<dbReference type="InterPro" id="IPR035476">
    <property type="entry name" value="SIS_PGI_1"/>
</dbReference>
<dbReference type="InterPro" id="IPR035482">
    <property type="entry name" value="SIS_PGI_2"/>
</dbReference>
<dbReference type="NCBIfam" id="NF001211">
    <property type="entry name" value="PRK00179.1"/>
    <property type="match status" value="1"/>
</dbReference>
<dbReference type="PANTHER" id="PTHR11469">
    <property type="entry name" value="GLUCOSE-6-PHOSPHATE ISOMERASE"/>
    <property type="match status" value="1"/>
</dbReference>
<dbReference type="PANTHER" id="PTHR11469:SF1">
    <property type="entry name" value="GLUCOSE-6-PHOSPHATE ISOMERASE"/>
    <property type="match status" value="1"/>
</dbReference>
<dbReference type="Pfam" id="PF00342">
    <property type="entry name" value="PGI"/>
    <property type="match status" value="1"/>
</dbReference>
<dbReference type="PRINTS" id="PR00662">
    <property type="entry name" value="G6PISOMERASE"/>
</dbReference>
<dbReference type="SUPFAM" id="SSF53697">
    <property type="entry name" value="SIS domain"/>
    <property type="match status" value="1"/>
</dbReference>
<dbReference type="PROSITE" id="PS00765">
    <property type="entry name" value="P_GLUCOSE_ISOMERASE_1"/>
    <property type="match status" value="1"/>
</dbReference>
<dbReference type="PROSITE" id="PS00174">
    <property type="entry name" value="P_GLUCOSE_ISOMERASE_2"/>
    <property type="match status" value="1"/>
</dbReference>
<dbReference type="PROSITE" id="PS51463">
    <property type="entry name" value="P_GLUCOSE_ISOMERASE_3"/>
    <property type="match status" value="1"/>
</dbReference>
<sequence length="549" mass="61545">MKNINPTQTAAWQALQKHFDEMKDVTIADLFAKDGDRFSKFSATFNDQMLVDYSKNRITEETLAKLQDLAKECDLAGAIKSMFSGEKINRTENRAVLHVALRNRSNTPILVDGKDVMPEVNAVLEKMKTFSEAIISGEWKGYTGKAITDVVNIGIGGSDLGPYMVTEALRPYKNHLNMHFVSNVDGTHISEVLKKVNPETTLFLVASKTFTTQETMTNAHSARDWFLKAAGDEKHVAKHFAALSTNAKAVGEFGIDTANMFEFWDWVGGRYSLWSAIGLSIVLSIGFDNFVELLSGAHAMDKHFSTTPAEKNLPVLLALIGIWYNNFFGAETEAILPYDQYMHRFAAYFQQGNMESNGKYVDRNGNVVDYQTGPIIWGEPGTNGQHAFYQLIHQGTKMVPCDFIAPAITHNPLSDHHQKLLSNFFAQTEALAFGKSREVVEQEYRDQGKDPATLDYVVPFKVFEGNRPTNSILLREITPFSLGALIALYEHKIFTQGVILNIFTFDQWGVELGKQLANRILPELKDDKEISSHDSSTNGLINRYKAWRG</sequence>
<feature type="chain" id="PRO_1000014021" description="Glucose-6-phosphate isomerase">
    <location>
        <begin position="1"/>
        <end position="549"/>
    </location>
</feature>
<feature type="active site" description="Proton donor" evidence="1">
    <location>
        <position position="355"/>
    </location>
</feature>
<feature type="active site" evidence="1">
    <location>
        <position position="386"/>
    </location>
</feature>
<feature type="active site" evidence="1">
    <location>
        <position position="514"/>
    </location>
</feature>
<feature type="modified residue" description="N6-acetyllysine" evidence="1">
    <location>
        <position position="80"/>
    </location>
</feature>
<feature type="modified residue" description="N6-acetyllysine" evidence="1">
    <location>
        <position position="228"/>
    </location>
</feature>
<feature type="modified residue" description="N6-acetyllysine" evidence="1">
    <location>
        <position position="234"/>
    </location>
</feature>
<evidence type="ECO:0000255" key="1">
    <source>
        <dbReference type="HAMAP-Rule" id="MF_00473"/>
    </source>
</evidence>
<accession>Q0SXP3</accession>
<comment type="function">
    <text evidence="1">Catalyzes the reversible isomerization of glucose-6-phosphate to fructose-6-phosphate.</text>
</comment>
<comment type="catalytic activity">
    <reaction evidence="1">
        <text>alpha-D-glucose 6-phosphate = beta-D-fructose 6-phosphate</text>
        <dbReference type="Rhea" id="RHEA:11816"/>
        <dbReference type="ChEBI" id="CHEBI:57634"/>
        <dbReference type="ChEBI" id="CHEBI:58225"/>
        <dbReference type="EC" id="5.3.1.9"/>
    </reaction>
</comment>
<comment type="pathway">
    <text evidence="1">Carbohydrate biosynthesis; gluconeogenesis.</text>
</comment>
<comment type="pathway">
    <text evidence="1">Carbohydrate degradation; glycolysis; D-glyceraldehyde 3-phosphate and glycerone phosphate from D-glucose: step 2/4.</text>
</comment>
<comment type="subcellular location">
    <subcellularLocation>
        <location evidence="1">Cytoplasm</location>
    </subcellularLocation>
</comment>
<comment type="similarity">
    <text evidence="1">Belongs to the GPI family.</text>
</comment>
<proteinExistence type="inferred from homology"/>
<reference key="1">
    <citation type="journal article" date="2006" name="BMC Genomics">
        <title>Complete genome sequence of Shigella flexneri 5b and comparison with Shigella flexneri 2a.</title>
        <authorList>
            <person name="Nie H."/>
            <person name="Yang F."/>
            <person name="Zhang X."/>
            <person name="Yang J."/>
            <person name="Chen L."/>
            <person name="Wang J."/>
            <person name="Xiong Z."/>
            <person name="Peng J."/>
            <person name="Sun L."/>
            <person name="Dong J."/>
            <person name="Xue Y."/>
            <person name="Xu X."/>
            <person name="Chen S."/>
            <person name="Yao Z."/>
            <person name="Shen Y."/>
            <person name="Jin Q."/>
        </authorList>
    </citation>
    <scope>NUCLEOTIDE SEQUENCE [LARGE SCALE GENOMIC DNA]</scope>
    <source>
        <strain>8401</strain>
    </source>
</reference>
<gene>
    <name evidence="1" type="primary">pgi</name>
    <name type="ordered locus">SFV_4188</name>
</gene>
<name>G6PI_SHIF8</name>
<organism>
    <name type="scientific">Shigella flexneri serotype 5b (strain 8401)</name>
    <dbReference type="NCBI Taxonomy" id="373384"/>
    <lineage>
        <taxon>Bacteria</taxon>
        <taxon>Pseudomonadati</taxon>
        <taxon>Pseudomonadota</taxon>
        <taxon>Gammaproteobacteria</taxon>
        <taxon>Enterobacterales</taxon>
        <taxon>Enterobacteriaceae</taxon>
        <taxon>Shigella</taxon>
    </lineage>
</organism>